<dbReference type="EC" id="2.3.2.-" evidence="2"/>
<dbReference type="EMBL" id="AB025615">
    <property type="protein sequence ID" value="BAA95745.1"/>
    <property type="molecule type" value="Genomic_DNA"/>
</dbReference>
<dbReference type="EMBL" id="CP002686">
    <property type="protein sequence ID" value="AEE77511.1"/>
    <property type="molecule type" value="Genomic_DNA"/>
</dbReference>
<dbReference type="EMBL" id="AF410281">
    <property type="protein sequence ID" value="AAK95267.1"/>
    <property type="molecule type" value="mRNA"/>
</dbReference>
<dbReference type="EMBL" id="AY102134">
    <property type="protein sequence ID" value="AAM26701.1"/>
    <property type="molecule type" value="mRNA"/>
</dbReference>
<dbReference type="RefSeq" id="NP_566840.1">
    <property type="nucleotide sequence ID" value="NM_113815.4"/>
</dbReference>
<dbReference type="SMR" id="Q9MBH2"/>
<dbReference type="FunCoup" id="Q9MBH2">
    <property type="interactions" value="141"/>
</dbReference>
<dbReference type="PaxDb" id="3702-AT3G28940.1"/>
<dbReference type="ProteomicsDB" id="245034"/>
<dbReference type="DNASU" id="822530"/>
<dbReference type="EnsemblPlants" id="AT3G28940.1">
    <property type="protein sequence ID" value="AT3G28940.1"/>
    <property type="gene ID" value="AT3G28940"/>
</dbReference>
<dbReference type="GeneID" id="822530"/>
<dbReference type="Gramene" id="AT3G28940.1">
    <property type="protein sequence ID" value="AT3G28940.1"/>
    <property type="gene ID" value="AT3G28940"/>
</dbReference>
<dbReference type="KEGG" id="ath:AT3G28940"/>
<dbReference type="Araport" id="AT3G28940"/>
<dbReference type="TAIR" id="AT3G28940"/>
<dbReference type="eggNOG" id="ENOG502S7T1">
    <property type="taxonomic scope" value="Eukaryota"/>
</dbReference>
<dbReference type="HOGENOM" id="CLU_093936_0_0_1"/>
<dbReference type="InParanoid" id="Q9MBH2"/>
<dbReference type="OMA" id="YHVYRLK"/>
<dbReference type="PhylomeDB" id="Q9MBH2"/>
<dbReference type="PRO" id="PR:Q9MBH2"/>
<dbReference type="Proteomes" id="UP000006548">
    <property type="component" value="Chromosome 3"/>
</dbReference>
<dbReference type="ExpressionAtlas" id="Q9MBH2">
    <property type="expression patterns" value="baseline and differential"/>
</dbReference>
<dbReference type="GO" id="GO:0005829">
    <property type="term" value="C:cytosol"/>
    <property type="evidence" value="ECO:0007005"/>
    <property type="project" value="TAIR"/>
</dbReference>
<dbReference type="GO" id="GO:0005886">
    <property type="term" value="C:plasma membrane"/>
    <property type="evidence" value="ECO:0007005"/>
    <property type="project" value="TAIR"/>
</dbReference>
<dbReference type="GO" id="GO:0016746">
    <property type="term" value="F:acyltransferase activity"/>
    <property type="evidence" value="ECO:0007669"/>
    <property type="project" value="UniProtKB-KW"/>
</dbReference>
<dbReference type="GO" id="GO:0019904">
    <property type="term" value="F:protein domain specific binding"/>
    <property type="evidence" value="ECO:0000353"/>
    <property type="project" value="CAFA"/>
</dbReference>
<dbReference type="CDD" id="cd06661">
    <property type="entry name" value="GGCT_like"/>
    <property type="match status" value="1"/>
</dbReference>
<dbReference type="FunFam" id="3.10.490.10:FF:000022">
    <property type="entry name" value="Protein AIG2 B"/>
    <property type="match status" value="1"/>
</dbReference>
<dbReference type="Gene3D" id="6.10.250.210">
    <property type="match status" value="1"/>
</dbReference>
<dbReference type="Gene3D" id="3.10.490.10">
    <property type="entry name" value="Gamma-glutamyl cyclotransferase-like"/>
    <property type="match status" value="1"/>
</dbReference>
<dbReference type="InterPro" id="IPR045038">
    <property type="entry name" value="AIG2-like"/>
</dbReference>
<dbReference type="InterPro" id="IPR009288">
    <property type="entry name" value="AIG2-like_dom"/>
</dbReference>
<dbReference type="InterPro" id="IPR013024">
    <property type="entry name" value="GGCT-like"/>
</dbReference>
<dbReference type="InterPro" id="IPR036568">
    <property type="entry name" value="GGCT-like_sf"/>
</dbReference>
<dbReference type="PANTHER" id="PTHR31544">
    <property type="entry name" value="AIG2-LIKE PROTEIN D"/>
    <property type="match status" value="1"/>
</dbReference>
<dbReference type="PANTHER" id="PTHR31544:SF12">
    <property type="entry name" value="PROTEIN AIG2 A-RELATED"/>
    <property type="match status" value="1"/>
</dbReference>
<dbReference type="Pfam" id="PF06094">
    <property type="entry name" value="GGACT"/>
    <property type="match status" value="1"/>
</dbReference>
<dbReference type="SUPFAM" id="SSF110857">
    <property type="entry name" value="Gamma-glutamyl cyclotransferase-like"/>
    <property type="match status" value="1"/>
</dbReference>
<comment type="function">
    <text evidence="1">Putative gamma-glutamylcyclotransferase.</text>
</comment>
<comment type="tissue specificity">
    <text evidence="3">Expressed in roots, leaves and stems.</text>
</comment>
<comment type="developmental stage">
    <text evidence="3">Peaks of expression at the time of rosette development and flowers production.</text>
</comment>
<comment type="induction">
    <text evidence="3">Up-regulated by biotic and chemical treatments.</text>
</comment>
<comment type="similarity">
    <text evidence="2">Belongs to the gamma-glutamylcyclotransferase family.</text>
</comment>
<keyword id="KW-0012">Acyltransferase</keyword>
<keyword id="KW-1185">Reference proteome</keyword>
<keyword id="KW-0808">Transferase</keyword>
<sequence>MTSSDKSLSHDVFVYGSFQEPSVVNLILECSPVMVPAQLHGYHVYRLKGRLHACISPSENGLINGKILTGLTDSQLENLDMIEGSEYVRKTVEVVLTDTSEKKQVETYVWANKDDPNLYGEWDFEEWRRLHMDKFIEASTKFIEWKKNPDGRSREEFEKFVFDDPPTAA</sequence>
<reference key="1">
    <citation type="journal article" date="2000" name="DNA Res.">
        <title>Structural analysis of Arabidopsis thaliana chromosome 3. I. Sequence features of the regions of 4,504,864 bp covered by sixty P1 and TAC clones.</title>
        <authorList>
            <person name="Sato S."/>
            <person name="Nakamura Y."/>
            <person name="Kaneko T."/>
            <person name="Katoh T."/>
            <person name="Asamizu E."/>
            <person name="Tabata S."/>
        </authorList>
    </citation>
    <scope>NUCLEOTIDE SEQUENCE [LARGE SCALE GENOMIC DNA]</scope>
    <source>
        <strain>cv. Columbia</strain>
    </source>
</reference>
<reference key="2">
    <citation type="journal article" date="2017" name="Plant J.">
        <title>Araport11: a complete reannotation of the Arabidopsis thaliana reference genome.</title>
        <authorList>
            <person name="Cheng C.Y."/>
            <person name="Krishnakumar V."/>
            <person name="Chan A.P."/>
            <person name="Thibaud-Nissen F."/>
            <person name="Schobel S."/>
            <person name="Town C.D."/>
        </authorList>
    </citation>
    <scope>GENOME REANNOTATION</scope>
    <source>
        <strain>cv. Columbia</strain>
    </source>
</reference>
<reference key="3">
    <citation type="journal article" date="2003" name="Science">
        <title>Empirical analysis of transcriptional activity in the Arabidopsis genome.</title>
        <authorList>
            <person name="Yamada K."/>
            <person name="Lim J."/>
            <person name="Dale J.M."/>
            <person name="Chen H."/>
            <person name="Shinn P."/>
            <person name="Palm C.J."/>
            <person name="Southwick A.M."/>
            <person name="Wu H.C."/>
            <person name="Kim C.J."/>
            <person name="Nguyen M."/>
            <person name="Pham P.K."/>
            <person name="Cheuk R.F."/>
            <person name="Karlin-Newmann G."/>
            <person name="Liu S.X."/>
            <person name="Lam B."/>
            <person name="Sakano H."/>
            <person name="Wu T."/>
            <person name="Yu G."/>
            <person name="Miranda M."/>
            <person name="Quach H.L."/>
            <person name="Tripp M."/>
            <person name="Chang C.H."/>
            <person name="Lee J.M."/>
            <person name="Toriumi M.J."/>
            <person name="Chan M.M."/>
            <person name="Tang C.C."/>
            <person name="Onodera C.S."/>
            <person name="Deng J.M."/>
            <person name="Akiyama K."/>
            <person name="Ansari Y."/>
            <person name="Arakawa T."/>
            <person name="Banh J."/>
            <person name="Banno F."/>
            <person name="Bowser L."/>
            <person name="Brooks S.Y."/>
            <person name="Carninci P."/>
            <person name="Chao Q."/>
            <person name="Choy N."/>
            <person name="Enju A."/>
            <person name="Goldsmith A.D."/>
            <person name="Gurjal M."/>
            <person name="Hansen N.F."/>
            <person name="Hayashizaki Y."/>
            <person name="Johnson-Hopson C."/>
            <person name="Hsuan V.W."/>
            <person name="Iida K."/>
            <person name="Karnes M."/>
            <person name="Khan S."/>
            <person name="Koesema E."/>
            <person name="Ishida J."/>
            <person name="Jiang P.X."/>
            <person name="Jones T."/>
            <person name="Kawai J."/>
            <person name="Kamiya A."/>
            <person name="Meyers C."/>
            <person name="Nakajima M."/>
            <person name="Narusaka M."/>
            <person name="Seki M."/>
            <person name="Sakurai T."/>
            <person name="Satou M."/>
            <person name="Tamse R."/>
            <person name="Vaysberg M."/>
            <person name="Wallender E.K."/>
            <person name="Wong C."/>
            <person name="Yamamura Y."/>
            <person name="Yuan S."/>
            <person name="Shinozaki K."/>
            <person name="Davis R.W."/>
            <person name="Theologis A."/>
            <person name="Ecker J.R."/>
        </authorList>
    </citation>
    <scope>NUCLEOTIDE SEQUENCE [LARGE SCALE MRNA]</scope>
    <source>
        <strain>cv. Columbia</strain>
    </source>
</reference>
<reference key="4">
    <citation type="journal article" date="2008" name="Proteins">
        <title>Solution structure of At3g28950 from Arabidopsis thaliana.</title>
        <authorList>
            <person name="de la Cruz N.B."/>
            <person name="Peterson F.C."/>
            <person name="Volkman B.F."/>
        </authorList>
    </citation>
    <scope>GENE FAMILY</scope>
</reference>
<evidence type="ECO:0000250" key="1">
    <source>
        <dbReference type="UniProtKB" id="O75223"/>
    </source>
</evidence>
<evidence type="ECO:0000305" key="2"/>
<evidence type="ECO:0000305" key="3">
    <source>
    </source>
</evidence>
<evidence type="ECO:0000312" key="4">
    <source>
        <dbReference type="Araport" id="AT3G28940"/>
    </source>
</evidence>
<evidence type="ECO:0000312" key="5">
    <source>
        <dbReference type="EMBL" id="AAK95267.1"/>
    </source>
</evidence>
<evidence type="ECO:0000312" key="6">
    <source>
        <dbReference type="EMBL" id="BAA95745.1"/>
    </source>
</evidence>
<accession>Q9MBH2</accession>
<proteinExistence type="evidence at transcript level"/>
<gene>
    <name evidence="2" type="primary">AIG2B</name>
    <name evidence="4" type="ordered locus">At3g28940</name>
    <name evidence="5" type="ORF">K5K13.2</name>
</gene>
<organism evidence="6">
    <name type="scientific">Arabidopsis thaliana</name>
    <name type="common">Mouse-ear cress</name>
    <dbReference type="NCBI Taxonomy" id="3702"/>
    <lineage>
        <taxon>Eukaryota</taxon>
        <taxon>Viridiplantae</taxon>
        <taxon>Streptophyta</taxon>
        <taxon>Embryophyta</taxon>
        <taxon>Tracheophyta</taxon>
        <taxon>Spermatophyta</taxon>
        <taxon>Magnoliopsida</taxon>
        <taxon>eudicotyledons</taxon>
        <taxon>Gunneridae</taxon>
        <taxon>Pentapetalae</taxon>
        <taxon>rosids</taxon>
        <taxon>malvids</taxon>
        <taxon>Brassicales</taxon>
        <taxon>Brassicaceae</taxon>
        <taxon>Camelineae</taxon>
        <taxon>Arabidopsis</taxon>
    </lineage>
</organism>
<name>AIG2B_ARATH</name>
<protein>
    <recommendedName>
        <fullName evidence="2">Protein AIG2 B</fullName>
        <ecNumber evidence="2">2.3.2.-</ecNumber>
    </recommendedName>
    <alternativeName>
        <fullName evidence="2">Avirulence-induced gene 2 protein B</fullName>
    </alternativeName>
    <alternativeName>
        <fullName evidence="1">Putative gamma-glutamylcyclotransferase</fullName>
    </alternativeName>
</protein>
<feature type="chain" id="PRO_0000438020" description="Protein AIG2 B">
    <location>
        <begin position="1"/>
        <end position="169"/>
    </location>
</feature>
<feature type="active site" description="Proton acceptor" evidence="1">
    <location>
        <position position="83"/>
    </location>
</feature>
<feature type="binding site" evidence="1">
    <location>
        <begin position="15"/>
        <end position="20"/>
    </location>
    <ligand>
        <name>substrate</name>
    </ligand>
</feature>